<dbReference type="EC" id="5.1.3.1" evidence="1"/>
<dbReference type="EMBL" id="AL583918">
    <property type="protein sequence ID" value="CAC30062.1"/>
    <property type="molecule type" value="Genomic_DNA"/>
</dbReference>
<dbReference type="PIR" id="B86978">
    <property type="entry name" value="B86978"/>
</dbReference>
<dbReference type="RefSeq" id="NP_301468.1">
    <property type="nucleotide sequence ID" value="NC_002677.1"/>
</dbReference>
<dbReference type="SMR" id="Q9CCP9"/>
<dbReference type="STRING" id="272631.gene:17574375"/>
<dbReference type="KEGG" id="mle:ML0554"/>
<dbReference type="PATRIC" id="fig|272631.5.peg.965"/>
<dbReference type="Leproma" id="ML0554"/>
<dbReference type="eggNOG" id="COG0036">
    <property type="taxonomic scope" value="Bacteria"/>
</dbReference>
<dbReference type="HOGENOM" id="CLU_054856_2_1_11"/>
<dbReference type="OrthoDB" id="1645589at2"/>
<dbReference type="Proteomes" id="UP000000806">
    <property type="component" value="Chromosome"/>
</dbReference>
<dbReference type="GO" id="GO:0004750">
    <property type="term" value="F:D-ribulose-phosphate 3-epimerase activity"/>
    <property type="evidence" value="ECO:0007669"/>
    <property type="project" value="UniProtKB-UniRule"/>
</dbReference>
<dbReference type="GO" id="GO:0046872">
    <property type="term" value="F:metal ion binding"/>
    <property type="evidence" value="ECO:0007669"/>
    <property type="project" value="UniProtKB-UniRule"/>
</dbReference>
<dbReference type="GO" id="GO:0019323">
    <property type="term" value="P:pentose catabolic process"/>
    <property type="evidence" value="ECO:0007669"/>
    <property type="project" value="UniProtKB-UniRule"/>
</dbReference>
<dbReference type="GO" id="GO:0006098">
    <property type="term" value="P:pentose-phosphate shunt"/>
    <property type="evidence" value="ECO:0007669"/>
    <property type="project" value="InterPro"/>
</dbReference>
<dbReference type="CDD" id="cd00429">
    <property type="entry name" value="RPE"/>
    <property type="match status" value="1"/>
</dbReference>
<dbReference type="FunFam" id="3.20.20.70:FF:000004">
    <property type="entry name" value="Ribulose-phosphate 3-epimerase"/>
    <property type="match status" value="1"/>
</dbReference>
<dbReference type="Gene3D" id="3.20.20.70">
    <property type="entry name" value="Aldolase class I"/>
    <property type="match status" value="1"/>
</dbReference>
<dbReference type="HAMAP" id="MF_02227">
    <property type="entry name" value="RPE"/>
    <property type="match status" value="1"/>
</dbReference>
<dbReference type="InterPro" id="IPR013785">
    <property type="entry name" value="Aldolase_TIM"/>
</dbReference>
<dbReference type="InterPro" id="IPR026019">
    <property type="entry name" value="Ribul_P_3_epim"/>
</dbReference>
<dbReference type="InterPro" id="IPR000056">
    <property type="entry name" value="Ribul_P_3_epim-like"/>
</dbReference>
<dbReference type="InterPro" id="IPR011060">
    <property type="entry name" value="RibuloseP-bd_barrel"/>
</dbReference>
<dbReference type="NCBIfam" id="NF004076">
    <property type="entry name" value="PRK05581.1-4"/>
    <property type="match status" value="1"/>
</dbReference>
<dbReference type="NCBIfam" id="TIGR01163">
    <property type="entry name" value="rpe"/>
    <property type="match status" value="1"/>
</dbReference>
<dbReference type="PANTHER" id="PTHR11749">
    <property type="entry name" value="RIBULOSE-5-PHOSPHATE-3-EPIMERASE"/>
    <property type="match status" value="1"/>
</dbReference>
<dbReference type="Pfam" id="PF00834">
    <property type="entry name" value="Ribul_P_3_epim"/>
    <property type="match status" value="1"/>
</dbReference>
<dbReference type="PIRSF" id="PIRSF001461">
    <property type="entry name" value="RPE"/>
    <property type="match status" value="1"/>
</dbReference>
<dbReference type="SUPFAM" id="SSF51366">
    <property type="entry name" value="Ribulose-phoshate binding barrel"/>
    <property type="match status" value="1"/>
</dbReference>
<dbReference type="PROSITE" id="PS01085">
    <property type="entry name" value="RIBUL_P_3_EPIMER_1"/>
    <property type="match status" value="1"/>
</dbReference>
<dbReference type="PROSITE" id="PS01086">
    <property type="entry name" value="RIBUL_P_3_EPIMER_2"/>
    <property type="match status" value="1"/>
</dbReference>
<accession>Q9CCP9</accession>
<sequence>MGPLIAPSILAADFARLTDEAAVVASADWLHVDVMDGHFVPNLTIGLPVVQSLLAASDIPMDCHLMIDNPDRWAPPYAEAGAYNVTFHAEATDNPVGVAHDIRTAGAKAGIGVKPGTPLNPYLDILPHFDTLLIMSVEPGFGGQAFIPEVLSKVRTVRKMVDAGELTILVEIDGGINADTIEQAAEAGVDCFVAGSAVYGAADPSAAVAALRRRAGAVSPHLRR</sequence>
<protein>
    <recommendedName>
        <fullName evidence="1">Ribulose-phosphate 3-epimerase</fullName>
        <ecNumber evidence="1">5.1.3.1</ecNumber>
    </recommendedName>
</protein>
<keyword id="KW-0119">Carbohydrate metabolism</keyword>
<keyword id="KW-0413">Isomerase</keyword>
<keyword id="KW-0479">Metal-binding</keyword>
<keyword id="KW-1185">Reference proteome</keyword>
<feature type="chain" id="PRO_0000171576" description="Ribulose-phosphate 3-epimerase">
    <location>
        <begin position="1"/>
        <end position="224"/>
    </location>
</feature>
<feature type="active site" description="Proton acceptor" evidence="1">
    <location>
        <position position="33"/>
    </location>
</feature>
<feature type="active site" description="Proton donor" evidence="1">
    <location>
        <position position="173"/>
    </location>
</feature>
<feature type="binding site" evidence="1">
    <location>
        <position position="8"/>
    </location>
    <ligand>
        <name>substrate</name>
    </ligand>
</feature>
<feature type="binding site" evidence="1">
    <location>
        <position position="31"/>
    </location>
    <ligand>
        <name>a divalent metal cation</name>
        <dbReference type="ChEBI" id="CHEBI:60240"/>
    </ligand>
</feature>
<feature type="binding site" evidence="1">
    <location>
        <position position="33"/>
    </location>
    <ligand>
        <name>a divalent metal cation</name>
        <dbReference type="ChEBI" id="CHEBI:60240"/>
    </ligand>
</feature>
<feature type="binding site" evidence="1">
    <location>
        <position position="64"/>
    </location>
    <ligand>
        <name>a divalent metal cation</name>
        <dbReference type="ChEBI" id="CHEBI:60240"/>
    </ligand>
</feature>
<feature type="binding site" evidence="1">
    <location>
        <position position="64"/>
    </location>
    <ligand>
        <name>substrate</name>
    </ligand>
</feature>
<feature type="binding site" evidence="1">
    <location>
        <begin position="140"/>
        <end position="143"/>
    </location>
    <ligand>
        <name>substrate</name>
    </ligand>
</feature>
<feature type="binding site" evidence="1">
    <location>
        <begin position="173"/>
        <end position="175"/>
    </location>
    <ligand>
        <name>substrate</name>
    </ligand>
</feature>
<feature type="binding site" evidence="1">
    <location>
        <position position="173"/>
    </location>
    <ligand>
        <name>a divalent metal cation</name>
        <dbReference type="ChEBI" id="CHEBI:60240"/>
    </ligand>
</feature>
<feature type="binding site" evidence="1">
    <location>
        <begin position="195"/>
        <end position="196"/>
    </location>
    <ligand>
        <name>substrate</name>
    </ligand>
</feature>
<gene>
    <name evidence="1" type="primary">rpe</name>
    <name type="ordered locus">ML0554</name>
</gene>
<name>RPE_MYCLE</name>
<evidence type="ECO:0000255" key="1">
    <source>
        <dbReference type="HAMAP-Rule" id="MF_02227"/>
    </source>
</evidence>
<proteinExistence type="inferred from homology"/>
<organism>
    <name type="scientific">Mycobacterium leprae (strain TN)</name>
    <dbReference type="NCBI Taxonomy" id="272631"/>
    <lineage>
        <taxon>Bacteria</taxon>
        <taxon>Bacillati</taxon>
        <taxon>Actinomycetota</taxon>
        <taxon>Actinomycetes</taxon>
        <taxon>Mycobacteriales</taxon>
        <taxon>Mycobacteriaceae</taxon>
        <taxon>Mycobacterium</taxon>
    </lineage>
</organism>
<reference key="1">
    <citation type="journal article" date="2001" name="Nature">
        <title>Massive gene decay in the leprosy bacillus.</title>
        <authorList>
            <person name="Cole S.T."/>
            <person name="Eiglmeier K."/>
            <person name="Parkhill J."/>
            <person name="James K.D."/>
            <person name="Thomson N.R."/>
            <person name="Wheeler P.R."/>
            <person name="Honore N."/>
            <person name="Garnier T."/>
            <person name="Churcher C.M."/>
            <person name="Harris D.E."/>
            <person name="Mungall K.L."/>
            <person name="Basham D."/>
            <person name="Brown D."/>
            <person name="Chillingworth T."/>
            <person name="Connor R."/>
            <person name="Davies R.M."/>
            <person name="Devlin K."/>
            <person name="Duthoy S."/>
            <person name="Feltwell T."/>
            <person name="Fraser A."/>
            <person name="Hamlin N."/>
            <person name="Holroyd S."/>
            <person name="Hornsby T."/>
            <person name="Jagels K."/>
            <person name="Lacroix C."/>
            <person name="Maclean J."/>
            <person name="Moule S."/>
            <person name="Murphy L.D."/>
            <person name="Oliver K."/>
            <person name="Quail M.A."/>
            <person name="Rajandream M.A."/>
            <person name="Rutherford K.M."/>
            <person name="Rutter S."/>
            <person name="Seeger K."/>
            <person name="Simon S."/>
            <person name="Simmonds M."/>
            <person name="Skelton J."/>
            <person name="Squares R."/>
            <person name="Squares S."/>
            <person name="Stevens K."/>
            <person name="Taylor K."/>
            <person name="Whitehead S."/>
            <person name="Woodward J.R."/>
            <person name="Barrell B.G."/>
        </authorList>
    </citation>
    <scope>NUCLEOTIDE SEQUENCE [LARGE SCALE GENOMIC DNA]</scope>
    <source>
        <strain>TN</strain>
    </source>
</reference>
<comment type="function">
    <text evidence="1">Catalyzes the reversible epimerization of D-ribulose 5-phosphate to D-xylulose 5-phosphate.</text>
</comment>
<comment type="catalytic activity">
    <reaction evidence="1">
        <text>D-ribulose 5-phosphate = D-xylulose 5-phosphate</text>
        <dbReference type="Rhea" id="RHEA:13677"/>
        <dbReference type="ChEBI" id="CHEBI:57737"/>
        <dbReference type="ChEBI" id="CHEBI:58121"/>
        <dbReference type="EC" id="5.1.3.1"/>
    </reaction>
</comment>
<comment type="cofactor">
    <cofactor evidence="1">
        <name>a divalent metal cation</name>
        <dbReference type="ChEBI" id="CHEBI:60240"/>
    </cofactor>
    <text evidence="1">Binds 1 divalent metal cation per subunit.</text>
</comment>
<comment type="pathway">
    <text evidence="1">Carbohydrate degradation.</text>
</comment>
<comment type="similarity">
    <text evidence="1">Belongs to the ribulose-phosphate 3-epimerase family.</text>
</comment>